<protein>
    <recommendedName>
        <fullName>Protein MGF 110-7L</fullName>
    </recommendedName>
</protein>
<proteinExistence type="inferred from homology"/>
<organism>
    <name type="scientific">African swine fever virus (isolate Warthog/Namibia/Wart80/1980)</name>
    <name type="common">ASFV</name>
    <dbReference type="NCBI Taxonomy" id="561444"/>
    <lineage>
        <taxon>Viruses</taxon>
        <taxon>Varidnaviria</taxon>
        <taxon>Bamfordvirae</taxon>
        <taxon>Nucleocytoviricota</taxon>
        <taxon>Pokkesviricetes</taxon>
        <taxon>Asfuvirales</taxon>
        <taxon>Asfarviridae</taxon>
        <taxon>Asfivirus</taxon>
        <taxon>African swine fever virus</taxon>
    </lineage>
</organism>
<dbReference type="EMBL" id="AY261366">
    <property type="status" value="NOT_ANNOTATED_CDS"/>
    <property type="molecule type" value="Genomic_DNA"/>
</dbReference>
<dbReference type="Proteomes" id="UP000000858">
    <property type="component" value="Segment"/>
</dbReference>
<dbReference type="InterPro" id="IPR004848">
    <property type="entry name" value="ASFV_fam_110"/>
</dbReference>
<dbReference type="Pfam" id="PF01639">
    <property type="entry name" value="v110"/>
    <property type="match status" value="1"/>
</dbReference>
<organismHost>
    <name type="scientific">Ornithodoros</name>
    <name type="common">relapsing fever ticks</name>
    <dbReference type="NCBI Taxonomy" id="6937"/>
</organismHost>
<organismHost>
    <name type="scientific">Phacochoerus aethiopicus</name>
    <name type="common">Warthog</name>
    <dbReference type="NCBI Taxonomy" id="85517"/>
</organismHost>
<organismHost>
    <name type="scientific">Phacochoerus africanus</name>
    <name type="common">Warthog</name>
    <dbReference type="NCBI Taxonomy" id="41426"/>
</organismHost>
<organismHost>
    <name type="scientific">Potamochoerus larvatus</name>
    <name type="common">Bushpig</name>
    <dbReference type="NCBI Taxonomy" id="273792"/>
</organismHost>
<organismHost>
    <name type="scientific">Sus scrofa</name>
    <name type="common">Pig</name>
    <dbReference type="NCBI Taxonomy" id="9823"/>
</organismHost>
<name>1107L_ASFWA</name>
<comment type="function">
    <text evidence="1">Plays a role in virus cell tropism, and may be required for efficient virus replication in macrophages.</text>
</comment>
<comment type="similarity">
    <text evidence="3">Belongs to the asfivirus MGF 110 family.</text>
</comment>
<accession>P0C9I1</accession>
<gene>
    <name type="ordered locus">War-015</name>
</gene>
<keyword id="KW-0325">Glycoprotein</keyword>
<keyword id="KW-0732">Signal</keyword>
<reference key="1">
    <citation type="submission" date="2003-03" db="EMBL/GenBank/DDBJ databases">
        <title>African swine fever virus genomes.</title>
        <authorList>
            <person name="Kutish G.F."/>
            <person name="Rock D.L."/>
        </authorList>
    </citation>
    <scope>NUCLEOTIDE SEQUENCE [LARGE SCALE GENOMIC DNA]</scope>
</reference>
<feature type="signal peptide" evidence="2">
    <location>
        <begin position="1"/>
        <end position="20"/>
    </location>
</feature>
<feature type="chain" id="PRO_0000373203" description="Protein MGF 110-7L">
    <location>
        <begin position="21"/>
        <end position="137"/>
    </location>
</feature>
<feature type="glycosylation site" description="N-linked (GlcNAc...) asparagine; by host" evidence="2">
    <location>
        <position position="69"/>
    </location>
</feature>
<feature type="glycosylation site" description="N-linked (GlcNAc...) asparagine; by host" evidence="2">
    <location>
        <position position="70"/>
    </location>
</feature>
<feature type="glycosylation site" description="N-linked (GlcNAc...) asparagine; by host" evidence="2">
    <location>
        <position position="105"/>
    </location>
</feature>
<sequence>MLVIILGIIGLLASSNLVSSSTSTRVGGHLPLTFDPPENELGYWCTYVESCRFCWDCEDGICTSRVWGNNSTSIVENDYVKYCEVSRWGNLCRYDVEEHIYHSMNCSDPKPWNPYKIARKEWKKNEHPRKDLKKDEF</sequence>
<evidence type="ECO:0000250" key="1"/>
<evidence type="ECO:0000255" key="2"/>
<evidence type="ECO:0000305" key="3"/>